<name>UBIE_RICRO</name>
<organism>
    <name type="scientific">Rickettsia rickettsii (strain Iowa)</name>
    <dbReference type="NCBI Taxonomy" id="452659"/>
    <lineage>
        <taxon>Bacteria</taxon>
        <taxon>Pseudomonadati</taxon>
        <taxon>Pseudomonadota</taxon>
        <taxon>Alphaproteobacteria</taxon>
        <taxon>Rickettsiales</taxon>
        <taxon>Rickettsiaceae</taxon>
        <taxon>Rickettsieae</taxon>
        <taxon>Rickettsia</taxon>
        <taxon>spotted fever group</taxon>
    </lineage>
</organism>
<keyword id="KW-0474">Menaquinone biosynthesis</keyword>
<keyword id="KW-0489">Methyltransferase</keyword>
<keyword id="KW-0949">S-adenosyl-L-methionine</keyword>
<keyword id="KW-0808">Transferase</keyword>
<keyword id="KW-0831">Ubiquinone biosynthesis</keyword>
<proteinExistence type="inferred from homology"/>
<accession>B0BUT9</accession>
<sequence length="248" mass="28276">MNQTNFGFKKVDYTKKQGLVNNVFSNVADKYDLMNDLMSLGLHRLWKDEFIRQIPNLNSHILDVASGSGDIALKLAKKARDRVNNISLTLSDINEEMLKQAKKKAIDLNLFQNLKFTVASAEELPFPDDSFDYYTIAFGIRNVPDINKALKEACRVLKPMGKFICLEFSKVKEGYIKDFYKFYSFNIIPSIGQMIAGNKEAYEYLVESIDLFPSQDEFRIMIKDAGFEEVGYKNLSGGIVAIHSAYTR</sequence>
<reference key="1">
    <citation type="journal article" date="2008" name="Infect. Immun.">
        <title>Genomic comparison of virulent Rickettsia rickettsii Sheila Smith and avirulent Rickettsia rickettsii Iowa.</title>
        <authorList>
            <person name="Ellison D.W."/>
            <person name="Clark T.R."/>
            <person name="Sturdevant D.E."/>
            <person name="Virtaneva K."/>
            <person name="Porcella S.F."/>
            <person name="Hackstadt T."/>
        </authorList>
    </citation>
    <scope>NUCLEOTIDE SEQUENCE [LARGE SCALE GENOMIC DNA]</scope>
    <source>
        <strain>Iowa</strain>
    </source>
</reference>
<feature type="chain" id="PRO_1000088292" description="Ubiquinone/menaquinone biosynthesis C-methyltransferase UbiE">
    <location>
        <begin position="1"/>
        <end position="248"/>
    </location>
</feature>
<feature type="binding site" evidence="1">
    <location>
        <position position="68"/>
    </location>
    <ligand>
        <name>S-adenosyl-L-methionine</name>
        <dbReference type="ChEBI" id="CHEBI:59789"/>
    </ligand>
</feature>
<feature type="binding site" evidence="1">
    <location>
        <position position="92"/>
    </location>
    <ligand>
        <name>S-adenosyl-L-methionine</name>
        <dbReference type="ChEBI" id="CHEBI:59789"/>
    </ligand>
</feature>
<dbReference type="EC" id="2.1.1.163" evidence="1"/>
<dbReference type="EC" id="2.1.1.201" evidence="1"/>
<dbReference type="EMBL" id="CP000766">
    <property type="protein sequence ID" value="ABY72999.1"/>
    <property type="molecule type" value="Genomic_DNA"/>
</dbReference>
<dbReference type="RefSeq" id="WP_012151179.1">
    <property type="nucleotide sequence ID" value="NC_010263.3"/>
</dbReference>
<dbReference type="SMR" id="B0BUT9"/>
<dbReference type="GeneID" id="79937701"/>
<dbReference type="KEGG" id="rrj:RrIowa_1235"/>
<dbReference type="eggNOG" id="COG2226">
    <property type="taxonomic scope" value="Bacteria"/>
</dbReference>
<dbReference type="HOGENOM" id="CLU_037990_0_1_5"/>
<dbReference type="UniPathway" id="UPA00079">
    <property type="reaction ID" value="UER00169"/>
</dbReference>
<dbReference type="UniPathway" id="UPA00232"/>
<dbReference type="Proteomes" id="UP000000796">
    <property type="component" value="Chromosome"/>
</dbReference>
<dbReference type="GO" id="GO:0008425">
    <property type="term" value="F:2-methoxy-6-polyprenyl-1,4-benzoquinol methyltransferase activity"/>
    <property type="evidence" value="ECO:0007669"/>
    <property type="project" value="UniProtKB-UniRule"/>
</dbReference>
<dbReference type="GO" id="GO:0043770">
    <property type="term" value="F:demethylmenaquinone methyltransferase activity"/>
    <property type="evidence" value="ECO:0007669"/>
    <property type="project" value="UniProtKB-UniRule"/>
</dbReference>
<dbReference type="GO" id="GO:0009060">
    <property type="term" value="P:aerobic respiration"/>
    <property type="evidence" value="ECO:0007669"/>
    <property type="project" value="UniProtKB-UniRule"/>
</dbReference>
<dbReference type="GO" id="GO:0009234">
    <property type="term" value="P:menaquinone biosynthetic process"/>
    <property type="evidence" value="ECO:0007669"/>
    <property type="project" value="UniProtKB-UniRule"/>
</dbReference>
<dbReference type="GO" id="GO:0032259">
    <property type="term" value="P:methylation"/>
    <property type="evidence" value="ECO:0007669"/>
    <property type="project" value="UniProtKB-KW"/>
</dbReference>
<dbReference type="CDD" id="cd02440">
    <property type="entry name" value="AdoMet_MTases"/>
    <property type="match status" value="1"/>
</dbReference>
<dbReference type="FunFam" id="3.40.50.150:FF:000250">
    <property type="entry name" value="Ubiquinone/menaquinone biosynthesis C-methyltransferase UbiE"/>
    <property type="match status" value="1"/>
</dbReference>
<dbReference type="Gene3D" id="3.40.50.150">
    <property type="entry name" value="Vaccinia Virus protein VP39"/>
    <property type="match status" value="1"/>
</dbReference>
<dbReference type="HAMAP" id="MF_01813">
    <property type="entry name" value="MenG_UbiE_methyltr"/>
    <property type="match status" value="1"/>
</dbReference>
<dbReference type="InterPro" id="IPR029063">
    <property type="entry name" value="SAM-dependent_MTases_sf"/>
</dbReference>
<dbReference type="InterPro" id="IPR004033">
    <property type="entry name" value="UbiE/COQ5_MeTrFase"/>
</dbReference>
<dbReference type="InterPro" id="IPR023576">
    <property type="entry name" value="UbiE/COQ5_MeTrFase_CS"/>
</dbReference>
<dbReference type="NCBIfam" id="TIGR01934">
    <property type="entry name" value="MenG_MenH_UbiE"/>
    <property type="match status" value="1"/>
</dbReference>
<dbReference type="NCBIfam" id="NF001242">
    <property type="entry name" value="PRK00216.1-3"/>
    <property type="match status" value="1"/>
</dbReference>
<dbReference type="NCBIfam" id="NF001244">
    <property type="entry name" value="PRK00216.1-5"/>
    <property type="match status" value="1"/>
</dbReference>
<dbReference type="PANTHER" id="PTHR43591:SF24">
    <property type="entry name" value="2-METHOXY-6-POLYPRENYL-1,4-BENZOQUINOL METHYLASE, MITOCHONDRIAL"/>
    <property type="match status" value="1"/>
</dbReference>
<dbReference type="PANTHER" id="PTHR43591">
    <property type="entry name" value="METHYLTRANSFERASE"/>
    <property type="match status" value="1"/>
</dbReference>
<dbReference type="Pfam" id="PF01209">
    <property type="entry name" value="Ubie_methyltran"/>
    <property type="match status" value="1"/>
</dbReference>
<dbReference type="SUPFAM" id="SSF53335">
    <property type="entry name" value="S-adenosyl-L-methionine-dependent methyltransferases"/>
    <property type="match status" value="1"/>
</dbReference>
<dbReference type="PROSITE" id="PS51608">
    <property type="entry name" value="SAM_MT_UBIE"/>
    <property type="match status" value="1"/>
</dbReference>
<dbReference type="PROSITE" id="PS01183">
    <property type="entry name" value="UBIE_1"/>
    <property type="match status" value="1"/>
</dbReference>
<dbReference type="PROSITE" id="PS01184">
    <property type="entry name" value="UBIE_2"/>
    <property type="match status" value="1"/>
</dbReference>
<comment type="function">
    <text evidence="1">Methyltransferase required for the conversion of demethylmenaquinol (DMKH2) to menaquinol (MKH2) and the conversion of 2-polyprenyl-6-methoxy-1,4-benzoquinol (DDMQH2) to 2-polyprenyl-3-methyl-6-methoxy-1,4-benzoquinol (DMQH2).</text>
</comment>
<comment type="catalytic activity">
    <reaction evidence="1">
        <text>a 2-demethylmenaquinol + S-adenosyl-L-methionine = a menaquinol + S-adenosyl-L-homocysteine + H(+)</text>
        <dbReference type="Rhea" id="RHEA:42640"/>
        <dbReference type="Rhea" id="RHEA-COMP:9539"/>
        <dbReference type="Rhea" id="RHEA-COMP:9563"/>
        <dbReference type="ChEBI" id="CHEBI:15378"/>
        <dbReference type="ChEBI" id="CHEBI:18151"/>
        <dbReference type="ChEBI" id="CHEBI:55437"/>
        <dbReference type="ChEBI" id="CHEBI:57856"/>
        <dbReference type="ChEBI" id="CHEBI:59789"/>
        <dbReference type="EC" id="2.1.1.163"/>
    </reaction>
</comment>
<comment type="catalytic activity">
    <reaction evidence="1">
        <text>a 2-methoxy-6-(all-trans-polyprenyl)benzene-1,4-diol + S-adenosyl-L-methionine = a 5-methoxy-2-methyl-3-(all-trans-polyprenyl)benzene-1,4-diol + S-adenosyl-L-homocysteine + H(+)</text>
        <dbReference type="Rhea" id="RHEA:28286"/>
        <dbReference type="Rhea" id="RHEA-COMP:10858"/>
        <dbReference type="Rhea" id="RHEA-COMP:10859"/>
        <dbReference type="ChEBI" id="CHEBI:15378"/>
        <dbReference type="ChEBI" id="CHEBI:57856"/>
        <dbReference type="ChEBI" id="CHEBI:59789"/>
        <dbReference type="ChEBI" id="CHEBI:84166"/>
        <dbReference type="ChEBI" id="CHEBI:84167"/>
        <dbReference type="EC" id="2.1.1.201"/>
    </reaction>
</comment>
<comment type="pathway">
    <text evidence="1">Quinol/quinone metabolism; menaquinone biosynthesis; menaquinol from 1,4-dihydroxy-2-naphthoate: step 2/2.</text>
</comment>
<comment type="pathway">
    <text evidence="1">Cofactor biosynthesis; ubiquinone biosynthesis.</text>
</comment>
<comment type="similarity">
    <text evidence="1">Belongs to the class I-like SAM-binding methyltransferase superfamily. MenG/UbiE family.</text>
</comment>
<evidence type="ECO:0000255" key="1">
    <source>
        <dbReference type="HAMAP-Rule" id="MF_01813"/>
    </source>
</evidence>
<protein>
    <recommendedName>
        <fullName evidence="1">Ubiquinone/menaquinone biosynthesis C-methyltransferase UbiE</fullName>
        <ecNumber evidence="1">2.1.1.163</ecNumber>
        <ecNumber evidence="1">2.1.1.201</ecNumber>
    </recommendedName>
    <alternativeName>
        <fullName evidence="1">2-methoxy-6-polyprenyl-1,4-benzoquinol methylase</fullName>
    </alternativeName>
    <alternativeName>
        <fullName evidence="1">Demethylmenaquinone methyltransferase</fullName>
    </alternativeName>
</protein>
<gene>
    <name evidence="1" type="primary">ubiE</name>
    <name type="ordered locus">RrIowa_1235</name>
</gene>